<organism>
    <name type="scientific">Mus musculus</name>
    <name type="common">Mouse</name>
    <dbReference type="NCBI Taxonomy" id="10090"/>
    <lineage>
        <taxon>Eukaryota</taxon>
        <taxon>Metazoa</taxon>
        <taxon>Chordata</taxon>
        <taxon>Craniata</taxon>
        <taxon>Vertebrata</taxon>
        <taxon>Euteleostomi</taxon>
        <taxon>Mammalia</taxon>
        <taxon>Eutheria</taxon>
        <taxon>Euarchontoglires</taxon>
        <taxon>Glires</taxon>
        <taxon>Rodentia</taxon>
        <taxon>Myomorpha</taxon>
        <taxon>Muroidea</taxon>
        <taxon>Muridae</taxon>
        <taxon>Murinae</taxon>
        <taxon>Mus</taxon>
        <taxon>Mus</taxon>
    </lineage>
</organism>
<keyword id="KW-0025">Alternative splicing</keyword>
<keyword id="KW-0963">Cytoplasm</keyword>
<keyword id="KW-0597">Phosphoprotein</keyword>
<keyword id="KW-1185">Reference proteome</keyword>
<evidence type="ECO:0000250" key="1"/>
<evidence type="ECO:0000250" key="2">
    <source>
        <dbReference type="UniProtKB" id="Q9ULQ0"/>
    </source>
</evidence>
<evidence type="ECO:0000256" key="3">
    <source>
        <dbReference type="SAM" id="MobiDB-lite"/>
    </source>
</evidence>
<evidence type="ECO:0000303" key="4">
    <source>
    </source>
</evidence>
<evidence type="ECO:0000303" key="5">
    <source>
    </source>
</evidence>
<evidence type="ECO:0000305" key="6"/>
<evidence type="ECO:0007744" key="7">
    <source>
    </source>
</evidence>
<accession>Q8C9H6</accession>
<accession>Q3TQB7</accession>
<accession>Q80TI6</accession>
<accession>Q8C7A2</accession>
<reference key="1">
    <citation type="journal article" date="2005" name="Science">
        <title>The transcriptional landscape of the mammalian genome.</title>
        <authorList>
            <person name="Carninci P."/>
            <person name="Kasukawa T."/>
            <person name="Katayama S."/>
            <person name="Gough J."/>
            <person name="Frith M.C."/>
            <person name="Maeda N."/>
            <person name="Oyama R."/>
            <person name="Ravasi T."/>
            <person name="Lenhard B."/>
            <person name="Wells C."/>
            <person name="Kodzius R."/>
            <person name="Shimokawa K."/>
            <person name="Bajic V.B."/>
            <person name="Brenner S.E."/>
            <person name="Batalov S."/>
            <person name="Forrest A.R."/>
            <person name="Zavolan M."/>
            <person name="Davis M.J."/>
            <person name="Wilming L.G."/>
            <person name="Aidinis V."/>
            <person name="Allen J.E."/>
            <person name="Ambesi-Impiombato A."/>
            <person name="Apweiler R."/>
            <person name="Aturaliya R.N."/>
            <person name="Bailey T.L."/>
            <person name="Bansal M."/>
            <person name="Baxter L."/>
            <person name="Beisel K.W."/>
            <person name="Bersano T."/>
            <person name="Bono H."/>
            <person name="Chalk A.M."/>
            <person name="Chiu K.P."/>
            <person name="Choudhary V."/>
            <person name="Christoffels A."/>
            <person name="Clutterbuck D.R."/>
            <person name="Crowe M.L."/>
            <person name="Dalla E."/>
            <person name="Dalrymple B.P."/>
            <person name="de Bono B."/>
            <person name="Della Gatta G."/>
            <person name="di Bernardo D."/>
            <person name="Down T."/>
            <person name="Engstrom P."/>
            <person name="Fagiolini M."/>
            <person name="Faulkner G."/>
            <person name="Fletcher C.F."/>
            <person name="Fukushima T."/>
            <person name="Furuno M."/>
            <person name="Futaki S."/>
            <person name="Gariboldi M."/>
            <person name="Georgii-Hemming P."/>
            <person name="Gingeras T.R."/>
            <person name="Gojobori T."/>
            <person name="Green R.E."/>
            <person name="Gustincich S."/>
            <person name="Harbers M."/>
            <person name="Hayashi Y."/>
            <person name="Hensch T.K."/>
            <person name="Hirokawa N."/>
            <person name="Hill D."/>
            <person name="Huminiecki L."/>
            <person name="Iacono M."/>
            <person name="Ikeo K."/>
            <person name="Iwama A."/>
            <person name="Ishikawa T."/>
            <person name="Jakt M."/>
            <person name="Kanapin A."/>
            <person name="Katoh M."/>
            <person name="Kawasawa Y."/>
            <person name="Kelso J."/>
            <person name="Kitamura H."/>
            <person name="Kitano H."/>
            <person name="Kollias G."/>
            <person name="Krishnan S.P."/>
            <person name="Kruger A."/>
            <person name="Kummerfeld S.K."/>
            <person name="Kurochkin I.V."/>
            <person name="Lareau L.F."/>
            <person name="Lazarevic D."/>
            <person name="Lipovich L."/>
            <person name="Liu J."/>
            <person name="Liuni S."/>
            <person name="McWilliam S."/>
            <person name="Madan Babu M."/>
            <person name="Madera M."/>
            <person name="Marchionni L."/>
            <person name="Matsuda H."/>
            <person name="Matsuzawa S."/>
            <person name="Miki H."/>
            <person name="Mignone F."/>
            <person name="Miyake S."/>
            <person name="Morris K."/>
            <person name="Mottagui-Tabar S."/>
            <person name="Mulder N."/>
            <person name="Nakano N."/>
            <person name="Nakauchi H."/>
            <person name="Ng P."/>
            <person name="Nilsson R."/>
            <person name="Nishiguchi S."/>
            <person name="Nishikawa S."/>
            <person name="Nori F."/>
            <person name="Ohara O."/>
            <person name="Okazaki Y."/>
            <person name="Orlando V."/>
            <person name="Pang K.C."/>
            <person name="Pavan W.J."/>
            <person name="Pavesi G."/>
            <person name="Pesole G."/>
            <person name="Petrovsky N."/>
            <person name="Piazza S."/>
            <person name="Reed J."/>
            <person name="Reid J.F."/>
            <person name="Ring B.Z."/>
            <person name="Ringwald M."/>
            <person name="Rost B."/>
            <person name="Ruan Y."/>
            <person name="Salzberg S.L."/>
            <person name="Sandelin A."/>
            <person name="Schneider C."/>
            <person name="Schoenbach C."/>
            <person name="Sekiguchi K."/>
            <person name="Semple C.A."/>
            <person name="Seno S."/>
            <person name="Sessa L."/>
            <person name="Sheng Y."/>
            <person name="Shibata Y."/>
            <person name="Shimada H."/>
            <person name="Shimada K."/>
            <person name="Silva D."/>
            <person name="Sinclair B."/>
            <person name="Sperling S."/>
            <person name="Stupka E."/>
            <person name="Sugiura K."/>
            <person name="Sultana R."/>
            <person name="Takenaka Y."/>
            <person name="Taki K."/>
            <person name="Tammoja K."/>
            <person name="Tan S.L."/>
            <person name="Tang S."/>
            <person name="Taylor M.S."/>
            <person name="Tegner J."/>
            <person name="Teichmann S.A."/>
            <person name="Ueda H.R."/>
            <person name="van Nimwegen E."/>
            <person name="Verardo R."/>
            <person name="Wei C.L."/>
            <person name="Yagi K."/>
            <person name="Yamanishi H."/>
            <person name="Zabarovsky E."/>
            <person name="Zhu S."/>
            <person name="Zimmer A."/>
            <person name="Hide W."/>
            <person name="Bult C."/>
            <person name="Grimmond S.M."/>
            <person name="Teasdale R.D."/>
            <person name="Liu E.T."/>
            <person name="Brusic V."/>
            <person name="Quackenbush J."/>
            <person name="Wahlestedt C."/>
            <person name="Mattick J.S."/>
            <person name="Hume D.A."/>
            <person name="Kai C."/>
            <person name="Sasaki D."/>
            <person name="Tomaru Y."/>
            <person name="Fukuda S."/>
            <person name="Kanamori-Katayama M."/>
            <person name="Suzuki M."/>
            <person name="Aoki J."/>
            <person name="Arakawa T."/>
            <person name="Iida J."/>
            <person name="Imamura K."/>
            <person name="Itoh M."/>
            <person name="Kato T."/>
            <person name="Kawaji H."/>
            <person name="Kawagashira N."/>
            <person name="Kawashima T."/>
            <person name="Kojima M."/>
            <person name="Kondo S."/>
            <person name="Konno H."/>
            <person name="Nakano K."/>
            <person name="Ninomiya N."/>
            <person name="Nishio T."/>
            <person name="Okada M."/>
            <person name="Plessy C."/>
            <person name="Shibata K."/>
            <person name="Shiraki T."/>
            <person name="Suzuki S."/>
            <person name="Tagami M."/>
            <person name="Waki K."/>
            <person name="Watahiki A."/>
            <person name="Okamura-Oho Y."/>
            <person name="Suzuki H."/>
            <person name="Kawai J."/>
            <person name="Hayashizaki Y."/>
        </authorList>
    </citation>
    <scope>NUCLEOTIDE SEQUENCE [LARGE SCALE MRNA] (ISOFORMS 1 AND 2)</scope>
    <source>
        <strain>C57BL/6J</strain>
        <tissue>Cerebellum</tissue>
        <tissue>Thymus</tissue>
    </source>
</reference>
<reference key="2">
    <citation type="journal article" date="2003" name="DNA Res.">
        <title>Prediction of the coding sequences of mouse homologues of KIAA gene: II. The complete nucleotide sequences of 400 mouse KIAA-homologous cDNAs identified by screening of terminal sequences of cDNA clones randomly sampled from size-fractionated libraries.</title>
        <authorList>
            <person name="Okazaki N."/>
            <person name="Kikuno R."/>
            <person name="Ohara R."/>
            <person name="Inamoto S."/>
            <person name="Aizawa H."/>
            <person name="Yuasa S."/>
            <person name="Nakajima D."/>
            <person name="Nagase T."/>
            <person name="Ohara O."/>
            <person name="Koga H."/>
        </authorList>
    </citation>
    <scope>NUCLEOTIDE SEQUENCE [LARGE SCALE MRNA] OF 46-844 (ISOFORM 3)</scope>
    <source>
        <tissue>Brain</tissue>
    </source>
</reference>
<reference key="3">
    <citation type="journal article" date="2009" name="Mol. Cell. Proteomics">
        <title>A PP2A phosphatase high density interaction network identifies a novel striatin-interacting phosphatase and kinase complex linked to the cerebral cavernous malformation 3 (CCM3) protein.</title>
        <authorList>
            <person name="Goudreault M."/>
            <person name="D'Ambrosio L.M."/>
            <person name="Kean M.J."/>
            <person name="Mullin M.J."/>
            <person name="Larsen B.G."/>
            <person name="Sanchez A."/>
            <person name="Chaudhry S."/>
            <person name="Chen G.I."/>
            <person name="Sicheri F."/>
            <person name="Nesvizhskii A.I."/>
            <person name="Aebersold R."/>
            <person name="Raught B."/>
            <person name="Gingras A.C."/>
        </authorList>
    </citation>
    <scope>IDENTIFICATION IN THE STRIATIN-INTERACTING PHOSPHATASE AND KINASE (STRIPAK) COMPLEX</scope>
    <scope>IDENTIFICATION BY MASS SPECTROMETRY</scope>
</reference>
<reference key="4">
    <citation type="journal article" date="2010" name="Cell">
        <title>A tissue-specific atlas of mouse protein phosphorylation and expression.</title>
        <authorList>
            <person name="Huttlin E.L."/>
            <person name="Jedrychowski M.P."/>
            <person name="Elias J.E."/>
            <person name="Goswami T."/>
            <person name="Rad R."/>
            <person name="Beausoleil S.A."/>
            <person name="Villen J."/>
            <person name="Haas W."/>
            <person name="Sowa M.E."/>
            <person name="Gygi S.P."/>
        </authorList>
    </citation>
    <scope>PHOSPHORYLATION [LARGE SCALE ANALYSIS] AT SER-328; SER-339 AND SER-364</scope>
    <scope>IDENTIFICATION BY MASS SPECTROMETRY [LARGE SCALE ANALYSIS]</scope>
    <source>
        <tissue>Brain</tissue>
        <tissue>Heart</tissue>
        <tissue>Testis</tissue>
    </source>
</reference>
<sequence length="844" mass="96294">MDDPAAPGPAGSPANDNGNGNGNGNGNGNGGKGKPAVPKGRETFRNQRRESEGSVDCPTLEFEYGDSDGHAAELSELYSYTENLEFTTNRKCFEEDFRTQVQDTKEWLELEEDAQKTYVMGLLDRLEVVSREKRLKVARAVLYLAQGTFGECDSEVDVLHWSRYNCFLLYQMGTFSAFLELLHMEIDNSQASSSALRKPAVSIADSTELRVLLSVMYLMVENIRLEREIDPCGWRTARETFRTELSFSTHNEEPFALLLFSMVTKFCSGLAPHFPIKKVLLLLWKVVMFTLGGFEHLQALKIQKRAELGLPPLAEDSIQVVKSMRAASPPSYTLDLGESQLAPPPSKLRGRRGSRRQLLTKQDSLDIYNERDLFKTEEPATEEEEESAADGERTLDGELDLLEQDPLVPPPPSQTPLSTDRVAFPKGLPWAPKVRQKDIEHFLEMSRNKFIGFTLGQDTDTLVGLPRPIHESVKTLKQHKYISIADIQIKNEEELEKCPLSLGEEVVPETPSEILYQGMLYSLPQYMIALLKILLAAAPTSKAKTDSINILADVLPEEMPVTVLQSMKLGIDVNRHKEIIVKSISALLLLLLKHFKLNHIYQFEYVSQHLVFANCIPLILKFFNQNILSYITAKNSISVLDYPCCTIQDLPELTTESLEAGDNSQFCWRNLFSCINLLRLLNKLTKWKHSRTMMLVVFKSAPILKRALKVKQAMLQLYVLKLLKIQTKYLGRQWRKSNMKTMSAIYQKVRHRMNDDWAYGNDIDARPWDFQAEECTLRANIEAFNSRRYDKPQDSEFSPVDNCLQSVLGQRLDLPEDFHYSYELWLEREVFSQPICWEELLQNH</sequence>
<feature type="chain" id="PRO_0000187023" description="Striatin-interacting proteins 2">
    <location>
        <begin position="1"/>
        <end position="844"/>
    </location>
</feature>
<feature type="region of interest" description="Disordered" evidence="3">
    <location>
        <begin position="1"/>
        <end position="58"/>
    </location>
</feature>
<feature type="region of interest" description="Disordered" evidence="3">
    <location>
        <begin position="331"/>
        <end position="355"/>
    </location>
</feature>
<feature type="region of interest" description="Disordered" evidence="3">
    <location>
        <begin position="370"/>
        <end position="422"/>
    </location>
</feature>
<feature type="compositionally biased region" description="Low complexity" evidence="3">
    <location>
        <begin position="1"/>
        <end position="18"/>
    </location>
</feature>
<feature type="compositionally biased region" description="Gly residues" evidence="3">
    <location>
        <begin position="19"/>
        <end position="33"/>
    </location>
</feature>
<feature type="compositionally biased region" description="Basic and acidic residues" evidence="3">
    <location>
        <begin position="39"/>
        <end position="52"/>
    </location>
</feature>
<feature type="compositionally biased region" description="Acidic residues" evidence="3">
    <location>
        <begin position="379"/>
        <end position="389"/>
    </location>
</feature>
<feature type="modified residue" description="Phosphoserine" evidence="7">
    <location>
        <position position="328"/>
    </location>
</feature>
<feature type="modified residue" description="Phosphoserine" evidence="7">
    <location>
        <position position="339"/>
    </location>
</feature>
<feature type="modified residue" description="Phosphoserine" evidence="7">
    <location>
        <position position="364"/>
    </location>
</feature>
<feature type="splice variant" id="VSP_019001" description="In isoform 2." evidence="5">
    <original>EAGD</original>
    <variation>GLSV</variation>
    <location>
        <begin position="659"/>
        <end position="662"/>
    </location>
</feature>
<feature type="splice variant" id="VSP_019002" description="In isoform 2." evidence="5">
    <location>
        <begin position="663"/>
        <end position="844"/>
    </location>
</feature>
<feature type="splice variant" id="VSP_014870" description="In isoform 3." evidence="4">
    <location>
        <begin position="694"/>
        <end position="721"/>
    </location>
</feature>
<feature type="sequence conflict" description="In Ref. 2; BAC65741." evidence="6" ref="2">
    <original>Q</original>
    <variation>L</variation>
    <location>
        <position position="47"/>
    </location>
</feature>
<dbReference type="EMBL" id="AK042073">
    <property type="protein sequence ID" value="BAC31154.1"/>
    <property type="molecule type" value="mRNA"/>
</dbReference>
<dbReference type="EMBL" id="AK163706">
    <property type="protein sequence ID" value="BAE37467.1"/>
    <property type="molecule type" value="mRNA"/>
</dbReference>
<dbReference type="EMBL" id="AK122459">
    <property type="protein sequence ID" value="BAC65741.1"/>
    <property type="molecule type" value="mRNA"/>
</dbReference>
<dbReference type="CCDS" id="CCDS19967.1">
    <molecule id="Q8C9H6-1"/>
</dbReference>
<dbReference type="CCDS" id="CCDS85025.1">
    <molecule id="Q8C9H6-3"/>
</dbReference>
<dbReference type="RefSeq" id="NP_001032829.1">
    <molecule id="Q8C9H6-3"/>
    <property type="nucleotide sequence ID" value="NM_001037740.1"/>
</dbReference>
<dbReference type="RefSeq" id="NP_796178.2">
    <molecule id="Q8C9H6-1"/>
    <property type="nucleotide sequence ID" value="NM_177204.3"/>
</dbReference>
<dbReference type="SMR" id="Q8C9H6"/>
<dbReference type="BioGRID" id="236153">
    <property type="interactions" value="37"/>
</dbReference>
<dbReference type="FunCoup" id="Q8C9H6">
    <property type="interactions" value="1658"/>
</dbReference>
<dbReference type="STRING" id="10090.ENSMUSP00000036477"/>
<dbReference type="iPTMnet" id="Q8C9H6"/>
<dbReference type="PhosphoSitePlus" id="Q8C9H6"/>
<dbReference type="jPOST" id="Q8C9H6"/>
<dbReference type="PaxDb" id="10090-ENSMUSP00000036477"/>
<dbReference type="ProteomicsDB" id="257501">
    <molecule id="Q8C9H6-1"/>
</dbReference>
<dbReference type="ProteomicsDB" id="257502">
    <molecule id="Q8C9H6-4"/>
</dbReference>
<dbReference type="ProteomicsDB" id="257503">
    <molecule id="Q8C9H6-3"/>
</dbReference>
<dbReference type="Antibodypedia" id="17893">
    <property type="antibodies" value="59 antibodies from 19 providers"/>
</dbReference>
<dbReference type="Ensembl" id="ENSMUST00000046028.12">
    <molecule id="Q8C9H6-1"/>
    <property type="protein sequence ID" value="ENSMUSP00000036477.7"/>
    <property type="gene ID" value="ENSMUSG00000039629.15"/>
</dbReference>
<dbReference type="Ensembl" id="ENSMUST00000151738.4">
    <molecule id="Q8C9H6-3"/>
    <property type="protein sequence ID" value="ENSMUSP00000119506.3"/>
    <property type="gene ID" value="ENSMUSG00000039629.15"/>
</dbReference>
<dbReference type="GeneID" id="320609"/>
<dbReference type="KEGG" id="mmu:320609"/>
<dbReference type="UCSC" id="uc009bem.1">
    <molecule id="Q8C9H6-1"/>
    <property type="organism name" value="mouse"/>
</dbReference>
<dbReference type="UCSC" id="uc009beo.1">
    <molecule id="Q8C9H6-3"/>
    <property type="organism name" value="mouse"/>
</dbReference>
<dbReference type="AGR" id="MGI:2444363"/>
<dbReference type="CTD" id="57464"/>
<dbReference type="MGI" id="MGI:2444363">
    <property type="gene designation" value="Strip2"/>
</dbReference>
<dbReference type="VEuPathDB" id="HostDB:ENSMUSG00000039629"/>
<dbReference type="eggNOG" id="KOG3680">
    <property type="taxonomic scope" value="Eukaryota"/>
</dbReference>
<dbReference type="GeneTree" id="ENSGT00400000022095"/>
<dbReference type="InParanoid" id="Q8C9H6"/>
<dbReference type="OMA" id="ETDSYGW"/>
<dbReference type="OrthoDB" id="18234at2759"/>
<dbReference type="PhylomeDB" id="Q8C9H6"/>
<dbReference type="TreeFam" id="TF314205"/>
<dbReference type="BioGRID-ORCS" id="320609">
    <property type="hits" value="5 hits in 79 CRISPR screens"/>
</dbReference>
<dbReference type="PRO" id="PR:Q8C9H6"/>
<dbReference type="Proteomes" id="UP000000589">
    <property type="component" value="Chromosome 6"/>
</dbReference>
<dbReference type="RNAct" id="Q8C9H6">
    <property type="molecule type" value="protein"/>
</dbReference>
<dbReference type="Bgee" id="ENSMUSG00000039629">
    <property type="expression patterns" value="Expressed in olfactory tubercle and 148 other cell types or tissues"/>
</dbReference>
<dbReference type="ExpressionAtlas" id="Q8C9H6">
    <property type="expression patterns" value="baseline and differential"/>
</dbReference>
<dbReference type="GO" id="GO:0005737">
    <property type="term" value="C:cytoplasm"/>
    <property type="evidence" value="ECO:0000250"/>
    <property type="project" value="UniProtKB"/>
</dbReference>
<dbReference type="GO" id="GO:0005829">
    <property type="term" value="C:cytosol"/>
    <property type="evidence" value="ECO:0007669"/>
    <property type="project" value="Ensembl"/>
</dbReference>
<dbReference type="GO" id="GO:0090443">
    <property type="term" value="C:FAR/SIN/STRIPAK complex"/>
    <property type="evidence" value="ECO:0000250"/>
    <property type="project" value="UniProtKB"/>
</dbReference>
<dbReference type="GO" id="GO:0016477">
    <property type="term" value="P:cell migration"/>
    <property type="evidence" value="ECO:0000250"/>
    <property type="project" value="UniProtKB"/>
</dbReference>
<dbReference type="GO" id="GO:0007010">
    <property type="term" value="P:cytoskeleton organization"/>
    <property type="evidence" value="ECO:0000250"/>
    <property type="project" value="UniProtKB"/>
</dbReference>
<dbReference type="GO" id="GO:0008360">
    <property type="term" value="P:regulation of cell shape"/>
    <property type="evidence" value="ECO:0000250"/>
    <property type="project" value="UniProtKB"/>
</dbReference>
<dbReference type="InterPro" id="IPR040185">
    <property type="entry name" value="Far11/STRP"/>
</dbReference>
<dbReference type="InterPro" id="IPR021819">
    <property type="entry name" value="Far11/STRP_C"/>
</dbReference>
<dbReference type="InterPro" id="IPR012486">
    <property type="entry name" value="Far11/STRP_N"/>
</dbReference>
<dbReference type="PANTHER" id="PTHR13239">
    <property type="entry name" value="PROTEIN REQUIRED FOR HYPHAL ANASTOMOSIS HAM-2"/>
    <property type="match status" value="1"/>
</dbReference>
<dbReference type="PANTHER" id="PTHR13239:SF6">
    <property type="entry name" value="STRIATIN-INTERACTING PROTEIN 2"/>
    <property type="match status" value="1"/>
</dbReference>
<dbReference type="Pfam" id="PF11882">
    <property type="entry name" value="DUF3402"/>
    <property type="match status" value="2"/>
</dbReference>
<dbReference type="Pfam" id="PF07923">
    <property type="entry name" value="N1221"/>
    <property type="match status" value="1"/>
</dbReference>
<dbReference type="SMART" id="SM01293">
    <property type="entry name" value="DUF3402"/>
    <property type="match status" value="1"/>
</dbReference>
<dbReference type="SMART" id="SM01292">
    <property type="entry name" value="N1221"/>
    <property type="match status" value="1"/>
</dbReference>
<comment type="function">
    <text evidence="2">Plays a role in the regulation of cell morphology and cytoskeletal organization. Required in the control of cell shape. Calmodulin-binding scaffolding protein which is the center of the striatin-interacting phosphatase and kinase (STRIPAK) complexes. STRIPAK complexes have critical roles in protein (de)phosphorylation and are regulators of multiple signaling pathways including Hippo, MAPK, nuclear receptor and cytoskeleton remodeling. Different types of STRIPAK complexes are involved in a variety of biological processes such as cell growth, differentiation, apoptosis, metabolism and immune regulation.</text>
</comment>
<comment type="subunit">
    <text evidence="2">Part of the core of STRIPAK complexes composed of PP2A catalytic and scaffolding subunits, the striatins (PP2A regulatory subunits), the striatin-associated proteins MOB4, STRIP1 and STRIP2, PDCD10 and members of the STE20 kinases, such as STK24 and STK26. Interacts with CTTNBP2NL.</text>
</comment>
<comment type="subcellular location">
    <subcellularLocation>
        <location evidence="1">Cytoplasm</location>
    </subcellularLocation>
    <text evidence="1">Enriched in lamellipodia.</text>
</comment>
<comment type="alternative products">
    <event type="alternative splicing"/>
    <isoform>
        <id>Q8C9H6-1</id>
        <name>1</name>
        <sequence type="displayed"/>
    </isoform>
    <isoform>
        <id>Q8C9H6-4</id>
        <name>2</name>
        <sequence type="described" ref="VSP_019001 VSP_019002"/>
    </isoform>
    <isoform>
        <id>Q8C9H6-3</id>
        <name>3</name>
        <sequence type="described" ref="VSP_014870"/>
    </isoform>
</comment>
<comment type="similarity">
    <text evidence="6">Belongs to the STRIP family.</text>
</comment>
<name>STRP2_MOUSE</name>
<proteinExistence type="evidence at protein level"/>
<protein>
    <recommendedName>
        <fullName>Striatin-interacting proteins 2</fullName>
    </recommendedName>
    <alternativeName>
        <fullName>Protein FAM40B</fullName>
    </alternativeName>
</protein>
<gene>
    <name type="primary">Strip2</name>
    <name type="synonym">Fam40b</name>
    <name type="synonym">Kiaa1170</name>
    <name type="synonym">Stripb</name>
</gene>